<reference key="1">
    <citation type="journal article" date="2005" name="Plant Mol. Biol.">
        <title>Complete chloroplast genome sequence of Glycine max and comparative analyses with other legume genomes.</title>
        <authorList>
            <person name="Saski C."/>
            <person name="Lee S.-B."/>
            <person name="Daniell H."/>
            <person name="Wood T.C."/>
            <person name="Tomkins J."/>
            <person name="Kim H.-G."/>
            <person name="Jansen R.K."/>
        </authorList>
    </citation>
    <scope>NUCLEOTIDE SEQUENCE [LARGE SCALE GENOMIC DNA]</scope>
    <source>
        <strain>cv. PI 437654</strain>
    </source>
</reference>
<proteinExistence type="inferred from homology"/>
<geneLocation type="chloroplast"/>
<feature type="chain" id="PRO_0000255558" description="Small ribosomal subunit protein uS15c">
    <location>
        <begin position="1"/>
        <end position="90"/>
    </location>
</feature>
<organism>
    <name type="scientific">Glycine max</name>
    <name type="common">Soybean</name>
    <name type="synonym">Glycine hispida</name>
    <dbReference type="NCBI Taxonomy" id="3847"/>
    <lineage>
        <taxon>Eukaryota</taxon>
        <taxon>Viridiplantae</taxon>
        <taxon>Streptophyta</taxon>
        <taxon>Embryophyta</taxon>
        <taxon>Tracheophyta</taxon>
        <taxon>Spermatophyta</taxon>
        <taxon>Magnoliopsida</taxon>
        <taxon>eudicotyledons</taxon>
        <taxon>Gunneridae</taxon>
        <taxon>Pentapetalae</taxon>
        <taxon>rosids</taxon>
        <taxon>fabids</taxon>
        <taxon>Fabales</taxon>
        <taxon>Fabaceae</taxon>
        <taxon>Papilionoideae</taxon>
        <taxon>50 kb inversion clade</taxon>
        <taxon>NPAAA clade</taxon>
        <taxon>indigoferoid/millettioid clade</taxon>
        <taxon>Phaseoleae</taxon>
        <taxon>Glycine</taxon>
        <taxon>Glycine subgen. Soja</taxon>
    </lineage>
</organism>
<gene>
    <name type="primary">rps15</name>
</gene>
<keyword id="KW-0150">Chloroplast</keyword>
<keyword id="KW-0934">Plastid</keyword>
<keyword id="KW-1185">Reference proteome</keyword>
<keyword id="KW-0687">Ribonucleoprotein</keyword>
<keyword id="KW-0689">Ribosomal protein</keyword>
<comment type="subunit">
    <text evidence="1">Part of the 30S ribosomal subunit.</text>
</comment>
<comment type="subcellular location">
    <subcellularLocation>
        <location>Plastid</location>
        <location>Chloroplast</location>
    </subcellularLocation>
</comment>
<comment type="similarity">
    <text evidence="2">Belongs to the universal ribosomal protein uS15 family.</text>
</comment>
<sequence>MVKNSIIPVISQEKKEKNPGSVEFQIFKFTDRIRRLTSHFELHRKDYLSQRGLRKILGKRQRLLSYLSKKDRIRYKKLINQFDIRESQIR</sequence>
<dbReference type="EMBL" id="DQ317523">
    <property type="protein sequence ID" value="ABC25170.1"/>
    <property type="molecule type" value="Genomic_DNA"/>
</dbReference>
<dbReference type="RefSeq" id="YP_538811.1">
    <property type="nucleotide sequence ID" value="NC_007942.1"/>
</dbReference>
<dbReference type="SMR" id="Q2PMN9"/>
<dbReference type="FunCoup" id="Q2PMN9">
    <property type="interactions" value="286"/>
</dbReference>
<dbReference type="STRING" id="3847.Q2PMN9"/>
<dbReference type="GeneID" id="3989354"/>
<dbReference type="KEGG" id="gmx:3989354"/>
<dbReference type="InParanoid" id="Q2PMN9"/>
<dbReference type="Proteomes" id="UP000008827">
    <property type="component" value="Chloroplast"/>
</dbReference>
<dbReference type="GO" id="GO:0009507">
    <property type="term" value="C:chloroplast"/>
    <property type="evidence" value="ECO:0007669"/>
    <property type="project" value="UniProtKB-SubCell"/>
</dbReference>
<dbReference type="GO" id="GO:1990904">
    <property type="term" value="C:ribonucleoprotein complex"/>
    <property type="evidence" value="ECO:0007669"/>
    <property type="project" value="UniProtKB-KW"/>
</dbReference>
<dbReference type="GO" id="GO:0005840">
    <property type="term" value="C:ribosome"/>
    <property type="evidence" value="ECO:0007669"/>
    <property type="project" value="UniProtKB-KW"/>
</dbReference>
<dbReference type="GO" id="GO:0003735">
    <property type="term" value="F:structural constituent of ribosome"/>
    <property type="evidence" value="ECO:0007669"/>
    <property type="project" value="InterPro"/>
</dbReference>
<dbReference type="GO" id="GO:0006412">
    <property type="term" value="P:translation"/>
    <property type="evidence" value="ECO:0007669"/>
    <property type="project" value="UniProtKB-UniRule"/>
</dbReference>
<dbReference type="CDD" id="cd00677">
    <property type="entry name" value="S15_NS1_EPRS_RNA-bind"/>
    <property type="match status" value="1"/>
</dbReference>
<dbReference type="Gene3D" id="1.10.287.10">
    <property type="entry name" value="S15/NS1, RNA-binding"/>
    <property type="match status" value="1"/>
</dbReference>
<dbReference type="HAMAP" id="MF_01343_B">
    <property type="entry name" value="Ribosomal_uS15_B"/>
    <property type="match status" value="1"/>
</dbReference>
<dbReference type="InterPro" id="IPR000589">
    <property type="entry name" value="Ribosomal_uS15"/>
</dbReference>
<dbReference type="InterPro" id="IPR005290">
    <property type="entry name" value="Ribosomal_uS15_bac-type"/>
</dbReference>
<dbReference type="InterPro" id="IPR009068">
    <property type="entry name" value="uS15_NS1_RNA-bd_sf"/>
</dbReference>
<dbReference type="NCBIfam" id="TIGR00952">
    <property type="entry name" value="S15_bact"/>
    <property type="match status" value="1"/>
</dbReference>
<dbReference type="PANTHER" id="PTHR23321">
    <property type="entry name" value="RIBOSOMAL PROTEIN S15, BACTERIAL AND ORGANELLAR"/>
    <property type="match status" value="1"/>
</dbReference>
<dbReference type="PANTHER" id="PTHR23321:SF26">
    <property type="entry name" value="SMALL RIBOSOMAL SUBUNIT PROTEIN US15M"/>
    <property type="match status" value="1"/>
</dbReference>
<dbReference type="Pfam" id="PF00312">
    <property type="entry name" value="Ribosomal_S15"/>
    <property type="match status" value="1"/>
</dbReference>
<dbReference type="SMART" id="SM01387">
    <property type="entry name" value="Ribosomal_S15"/>
    <property type="match status" value="1"/>
</dbReference>
<dbReference type="SUPFAM" id="SSF47060">
    <property type="entry name" value="S15/NS1 RNA-binding domain"/>
    <property type="match status" value="1"/>
</dbReference>
<dbReference type="PROSITE" id="PS00362">
    <property type="entry name" value="RIBOSOMAL_S15"/>
    <property type="match status" value="1"/>
</dbReference>
<protein>
    <recommendedName>
        <fullName evidence="2">Small ribosomal subunit protein uS15c</fullName>
    </recommendedName>
    <alternativeName>
        <fullName>30S ribosomal protein S15, chloroplastic</fullName>
    </alternativeName>
</protein>
<evidence type="ECO:0000250" key="1"/>
<evidence type="ECO:0000305" key="2"/>
<accession>Q2PMN9</accession>
<name>RR15_SOYBN</name>